<sequence length="143" mass="15816">MSLTEKDKAAVRALWGKISKSADAIGADALSRMLFVYPQTKTYFTHWPDLSPGSVHVKKHGKNVMGGIALAVSKIDDLTNGLMELSEQHAYQLRVDPANFKILSHCILVVVSIMYPKDFTPEAHVSLDKFLSGVSLALAERYR</sequence>
<organism>
    <name type="scientific">Cottoperca gobio</name>
    <name type="common">Frogmouth</name>
    <name type="synonym">Aphritis gobio</name>
    <dbReference type="NCBI Taxonomy" id="56716"/>
    <lineage>
        <taxon>Eukaryota</taxon>
        <taxon>Metazoa</taxon>
        <taxon>Chordata</taxon>
        <taxon>Craniata</taxon>
        <taxon>Vertebrata</taxon>
        <taxon>Euteleostomi</taxon>
        <taxon>Actinopterygii</taxon>
        <taxon>Neopterygii</taxon>
        <taxon>Teleostei</taxon>
        <taxon>Neoteleostei</taxon>
        <taxon>Acanthomorphata</taxon>
        <taxon>Eupercaria</taxon>
        <taxon>Perciformes</taxon>
        <taxon>Notothenioidei</taxon>
        <taxon>Bovichtidae</taxon>
        <taxon>Cottoperca</taxon>
    </lineage>
</organism>
<comment type="function">
    <text evidence="5">Involved in oxygen transport from gills to the various peripheral tissues.</text>
</comment>
<comment type="subunit">
    <text evidence="3 4">Hb 1 is a heterotetramer of two alpha-1 and two beta chains.</text>
</comment>
<comment type="tissue specificity">
    <text evidence="5">Red blood cells.</text>
</comment>
<comment type="miscellaneous">
    <text evidence="3">This fish has two hemoglobins: Hb1 and Hb2. They display the Bohr and root effects.</text>
</comment>
<comment type="similarity">
    <text evidence="2">Belongs to the globin family.</text>
</comment>
<accession>P84653</accession>
<feature type="initiator methionine" description="Removed" evidence="1">
    <location>
        <position position="1"/>
    </location>
</feature>
<feature type="chain" id="PRO_0000250611" description="Hemoglobin subunit alpha-1" evidence="3">
    <location>
        <begin position="2"/>
        <end position="143"/>
    </location>
</feature>
<feature type="domain" description="Globin" evidence="2">
    <location>
        <begin position="2"/>
        <end position="143"/>
    </location>
</feature>
<feature type="binding site" evidence="2">
    <location>
        <position position="60"/>
    </location>
    <ligand>
        <name>O2</name>
        <dbReference type="ChEBI" id="CHEBI:15379"/>
    </ligand>
</feature>
<feature type="binding site" description="proximal binding residue" evidence="2">
    <location>
        <position position="89"/>
    </location>
    <ligand>
        <name>heme b</name>
        <dbReference type="ChEBI" id="CHEBI:60344"/>
    </ligand>
    <ligandPart>
        <name>Fe</name>
        <dbReference type="ChEBI" id="CHEBI:18248"/>
    </ligandPart>
</feature>
<feature type="modified residue" description="N-acetylserine" evidence="3">
    <location>
        <position position="2"/>
    </location>
</feature>
<name>HBA1_COTGO</name>
<evidence type="ECO:0000250" key="1"/>
<evidence type="ECO:0000255" key="2">
    <source>
        <dbReference type="PROSITE-ProRule" id="PRU00238"/>
    </source>
</evidence>
<evidence type="ECO:0000269" key="3">
    <source>
    </source>
</evidence>
<evidence type="ECO:0000269" key="4">
    <source ref="1"/>
</evidence>
<evidence type="ECO:0000305" key="5"/>
<proteinExistence type="evidence at protein level"/>
<reference evidence="5" key="1">
    <citation type="journal article" date="2006" name="Polar Biol.">
        <title>Embryonic beta-globin in the non-Antartic notothenioid fish Cottoperca gobio (Bovichtidae).</title>
        <authorList>
            <person name="Giordano D."/>
            <person name="Grassi L."/>
            <person name="Parisi E."/>
            <person name="Bargelloni L."/>
            <person name="di Prisco G."/>
            <person name="Verde C."/>
        </authorList>
    </citation>
    <scope>PROTEIN SEQUENCE OF 2-143</scope>
    <scope>SUBUNIT</scope>
    <source>
        <tissue evidence="4">Blood</tissue>
    </source>
</reference>
<reference evidence="5" key="2">
    <citation type="journal article" date="2009" name="FEBS J.">
        <title>The hemoglobins of the sub-Antarctic fish Cottoperca gobio, a phyletically basal species--oxygen-binding equilibria, kinetics and molecular dynamics.</title>
        <authorList>
            <person name="Giordano D."/>
            <person name="Boechi L."/>
            <person name="Vergara A."/>
            <person name="Marti M.A."/>
            <person name="Samuni U."/>
            <person name="Dantsker D."/>
            <person name="Grassi L."/>
            <person name="Estrin D.A."/>
            <person name="Friedman J.M."/>
            <person name="Mazzarella L."/>
            <person name="di Prisco G."/>
            <person name="Verde C."/>
        </authorList>
    </citation>
    <scope>PROTEIN SEQUENCE OF 2-143</scope>
    <scope>SUBUNIT</scope>
    <scope>ACETYLATION AT SER-2</scope>
    <source>
        <tissue evidence="3">Blood</tissue>
    </source>
</reference>
<keyword id="KW-0007">Acetylation</keyword>
<keyword id="KW-0903">Direct protein sequencing</keyword>
<keyword id="KW-0349">Heme</keyword>
<keyword id="KW-0408">Iron</keyword>
<keyword id="KW-0479">Metal-binding</keyword>
<keyword id="KW-0561">Oxygen transport</keyword>
<keyword id="KW-1185">Reference proteome</keyword>
<keyword id="KW-0813">Transport</keyword>
<dbReference type="SMR" id="P84653"/>
<dbReference type="iPTMnet" id="P84653"/>
<dbReference type="Ensembl" id="ENSCGOT00000014598">
    <property type="protein sequence ID" value="ENSCGOP00000013506"/>
    <property type="gene ID" value="ENSCGOG00000006588"/>
</dbReference>
<dbReference type="InParanoid" id="P84653"/>
<dbReference type="OrthoDB" id="8751793at2759"/>
<dbReference type="Proteomes" id="UP000504630">
    <property type="component" value="Unplaced"/>
</dbReference>
<dbReference type="GO" id="GO:0072562">
    <property type="term" value="C:blood microparticle"/>
    <property type="evidence" value="ECO:0007669"/>
    <property type="project" value="TreeGrafter"/>
</dbReference>
<dbReference type="GO" id="GO:0031838">
    <property type="term" value="C:haptoglobin-hemoglobin complex"/>
    <property type="evidence" value="ECO:0007669"/>
    <property type="project" value="TreeGrafter"/>
</dbReference>
<dbReference type="GO" id="GO:0005833">
    <property type="term" value="C:hemoglobin complex"/>
    <property type="evidence" value="ECO:0000250"/>
    <property type="project" value="UniProtKB"/>
</dbReference>
<dbReference type="GO" id="GO:0031720">
    <property type="term" value="F:haptoglobin binding"/>
    <property type="evidence" value="ECO:0007669"/>
    <property type="project" value="TreeGrafter"/>
</dbReference>
<dbReference type="GO" id="GO:0020037">
    <property type="term" value="F:heme binding"/>
    <property type="evidence" value="ECO:0007669"/>
    <property type="project" value="InterPro"/>
</dbReference>
<dbReference type="GO" id="GO:0005506">
    <property type="term" value="F:iron ion binding"/>
    <property type="evidence" value="ECO:0007669"/>
    <property type="project" value="InterPro"/>
</dbReference>
<dbReference type="GO" id="GO:0043177">
    <property type="term" value="F:organic acid binding"/>
    <property type="evidence" value="ECO:0007669"/>
    <property type="project" value="TreeGrafter"/>
</dbReference>
<dbReference type="GO" id="GO:0019825">
    <property type="term" value="F:oxygen binding"/>
    <property type="evidence" value="ECO:0007669"/>
    <property type="project" value="InterPro"/>
</dbReference>
<dbReference type="GO" id="GO:0005344">
    <property type="term" value="F:oxygen carrier activity"/>
    <property type="evidence" value="ECO:0000250"/>
    <property type="project" value="UniProtKB"/>
</dbReference>
<dbReference type="GO" id="GO:0004601">
    <property type="term" value="F:peroxidase activity"/>
    <property type="evidence" value="ECO:0007669"/>
    <property type="project" value="TreeGrafter"/>
</dbReference>
<dbReference type="GO" id="GO:0042744">
    <property type="term" value="P:hydrogen peroxide catabolic process"/>
    <property type="evidence" value="ECO:0007669"/>
    <property type="project" value="TreeGrafter"/>
</dbReference>
<dbReference type="GO" id="GO:0015671">
    <property type="term" value="P:oxygen transport"/>
    <property type="evidence" value="ECO:0000250"/>
    <property type="project" value="UniProtKB"/>
</dbReference>
<dbReference type="CDD" id="cd08927">
    <property type="entry name" value="Hb-alpha-like"/>
    <property type="match status" value="1"/>
</dbReference>
<dbReference type="FunFam" id="1.10.490.10:FF:000002">
    <property type="entry name" value="Hemoglobin subunit alpha"/>
    <property type="match status" value="1"/>
</dbReference>
<dbReference type="Gene3D" id="1.10.490.10">
    <property type="entry name" value="Globins"/>
    <property type="match status" value="1"/>
</dbReference>
<dbReference type="InterPro" id="IPR000971">
    <property type="entry name" value="Globin"/>
</dbReference>
<dbReference type="InterPro" id="IPR009050">
    <property type="entry name" value="Globin-like_sf"/>
</dbReference>
<dbReference type="InterPro" id="IPR012292">
    <property type="entry name" value="Globin/Proto"/>
</dbReference>
<dbReference type="InterPro" id="IPR002338">
    <property type="entry name" value="Hemoglobin_a-typ"/>
</dbReference>
<dbReference type="InterPro" id="IPR050056">
    <property type="entry name" value="Hemoglobin_oxygen_transport"/>
</dbReference>
<dbReference type="InterPro" id="IPR002339">
    <property type="entry name" value="Hemoglobin_pi"/>
</dbReference>
<dbReference type="PANTHER" id="PTHR11442">
    <property type="entry name" value="HEMOGLOBIN FAMILY MEMBER"/>
    <property type="match status" value="1"/>
</dbReference>
<dbReference type="PANTHER" id="PTHR11442:SF41">
    <property type="entry name" value="HEMOGLOBIN SUBUNIT ZETA"/>
    <property type="match status" value="1"/>
</dbReference>
<dbReference type="Pfam" id="PF00042">
    <property type="entry name" value="Globin"/>
    <property type="match status" value="1"/>
</dbReference>
<dbReference type="PRINTS" id="PR00612">
    <property type="entry name" value="ALPHAHAEM"/>
</dbReference>
<dbReference type="PRINTS" id="PR00815">
    <property type="entry name" value="PIHAEM"/>
</dbReference>
<dbReference type="SUPFAM" id="SSF46458">
    <property type="entry name" value="Globin-like"/>
    <property type="match status" value="1"/>
</dbReference>
<dbReference type="PROSITE" id="PS01033">
    <property type="entry name" value="GLOBIN"/>
    <property type="match status" value="1"/>
</dbReference>
<protein>
    <recommendedName>
        <fullName>Hemoglobin subunit alpha-1</fullName>
    </recommendedName>
    <alternativeName>
        <fullName>Alpha-1-globin</fullName>
    </alternativeName>
    <alternativeName>
        <fullName>Hemoglobin alpha-1 chain</fullName>
    </alternativeName>
</protein>
<gene>
    <name type="primary">hba1</name>
</gene>